<keyword id="KW-0963">Cytoplasm</keyword>
<keyword id="KW-0255">Endonuclease</keyword>
<keyword id="KW-0378">Hydrolase</keyword>
<keyword id="KW-0479">Metal-binding</keyword>
<keyword id="KW-0540">Nuclease</keyword>
<keyword id="KW-0690">Ribosome biogenesis</keyword>
<keyword id="KW-0698">rRNA processing</keyword>
<keyword id="KW-0862">Zinc</keyword>
<sequence>MFTIDFSDHTGLVKDAWYKQIEDLLEFAKKEEHIEDDAELSVTFVDKQEIQEINRTYRDKDKVTDVISFALEEDEPEIDFSGLDIPRVLGDIIICTDVAQEQANNYGHSFERELGFLALHGFLHLLGYDHMTEADEKEMFGRQDTILNAYGLTRD</sequence>
<comment type="function">
    <text evidence="1">Single strand-specific metallo-endoribonuclease involved in late-stage 70S ribosome quality control and in maturation of the 3' terminus of the 16S rRNA.</text>
</comment>
<comment type="cofactor">
    <cofactor evidence="1">
        <name>Zn(2+)</name>
        <dbReference type="ChEBI" id="CHEBI:29105"/>
    </cofactor>
    <text evidence="1">Binds 1 zinc ion.</text>
</comment>
<comment type="subcellular location">
    <subcellularLocation>
        <location evidence="1">Cytoplasm</location>
    </subcellularLocation>
</comment>
<comment type="similarity">
    <text evidence="1">Belongs to the endoribonuclease YbeY family.</text>
</comment>
<name>YBEY_STAA1</name>
<protein>
    <recommendedName>
        <fullName evidence="1">Endoribonuclease YbeY</fullName>
        <ecNumber evidence="1">3.1.-.-</ecNumber>
    </recommendedName>
</protein>
<evidence type="ECO:0000255" key="1">
    <source>
        <dbReference type="HAMAP-Rule" id="MF_00009"/>
    </source>
</evidence>
<gene>
    <name evidence="1" type="primary">ybeY</name>
    <name type="ordered locus">SAHV_1557</name>
</gene>
<dbReference type="EC" id="3.1.-.-" evidence="1"/>
<dbReference type="EMBL" id="AP009324">
    <property type="protein sequence ID" value="BAF78440.1"/>
    <property type="molecule type" value="Genomic_DNA"/>
</dbReference>
<dbReference type="RefSeq" id="WP_000494134.1">
    <property type="nucleotide sequence ID" value="NZ_CTYB01000003.1"/>
</dbReference>
<dbReference type="SMR" id="A7X2W8"/>
<dbReference type="KEGG" id="saw:SAHV_1557"/>
<dbReference type="HOGENOM" id="CLU_106710_3_0_9"/>
<dbReference type="GO" id="GO:0005737">
    <property type="term" value="C:cytoplasm"/>
    <property type="evidence" value="ECO:0007669"/>
    <property type="project" value="UniProtKB-SubCell"/>
</dbReference>
<dbReference type="GO" id="GO:0004222">
    <property type="term" value="F:metalloendopeptidase activity"/>
    <property type="evidence" value="ECO:0007669"/>
    <property type="project" value="InterPro"/>
</dbReference>
<dbReference type="GO" id="GO:0004521">
    <property type="term" value="F:RNA endonuclease activity"/>
    <property type="evidence" value="ECO:0007669"/>
    <property type="project" value="UniProtKB-UniRule"/>
</dbReference>
<dbReference type="GO" id="GO:0008270">
    <property type="term" value="F:zinc ion binding"/>
    <property type="evidence" value="ECO:0007669"/>
    <property type="project" value="UniProtKB-UniRule"/>
</dbReference>
<dbReference type="GO" id="GO:0006364">
    <property type="term" value="P:rRNA processing"/>
    <property type="evidence" value="ECO:0007669"/>
    <property type="project" value="UniProtKB-UniRule"/>
</dbReference>
<dbReference type="Gene3D" id="3.40.390.30">
    <property type="entry name" value="Metalloproteases ('zincins'), catalytic domain"/>
    <property type="match status" value="1"/>
</dbReference>
<dbReference type="HAMAP" id="MF_00009">
    <property type="entry name" value="Endoribonucl_YbeY"/>
    <property type="match status" value="1"/>
</dbReference>
<dbReference type="InterPro" id="IPR023091">
    <property type="entry name" value="MetalPrtase_cat_dom_sf_prd"/>
</dbReference>
<dbReference type="InterPro" id="IPR002036">
    <property type="entry name" value="YbeY"/>
</dbReference>
<dbReference type="InterPro" id="IPR020549">
    <property type="entry name" value="YbeY_CS"/>
</dbReference>
<dbReference type="NCBIfam" id="TIGR00043">
    <property type="entry name" value="rRNA maturation RNase YbeY"/>
    <property type="match status" value="1"/>
</dbReference>
<dbReference type="PANTHER" id="PTHR46986">
    <property type="entry name" value="ENDORIBONUCLEASE YBEY, CHLOROPLASTIC"/>
    <property type="match status" value="1"/>
</dbReference>
<dbReference type="PANTHER" id="PTHR46986:SF1">
    <property type="entry name" value="ENDORIBONUCLEASE YBEY, CHLOROPLASTIC"/>
    <property type="match status" value="1"/>
</dbReference>
<dbReference type="Pfam" id="PF02130">
    <property type="entry name" value="YbeY"/>
    <property type="match status" value="1"/>
</dbReference>
<dbReference type="SUPFAM" id="SSF55486">
    <property type="entry name" value="Metalloproteases ('zincins'), catalytic domain"/>
    <property type="match status" value="1"/>
</dbReference>
<dbReference type="PROSITE" id="PS01306">
    <property type="entry name" value="UPF0054"/>
    <property type="match status" value="1"/>
</dbReference>
<proteinExistence type="inferred from homology"/>
<accession>A7X2W8</accession>
<reference key="1">
    <citation type="journal article" date="2008" name="Antimicrob. Agents Chemother.">
        <title>Mutated response regulator graR is responsible for phenotypic conversion of Staphylococcus aureus from heterogeneous vancomycin-intermediate resistance to vancomycin-intermediate resistance.</title>
        <authorList>
            <person name="Neoh H.-M."/>
            <person name="Cui L."/>
            <person name="Yuzawa H."/>
            <person name="Takeuchi F."/>
            <person name="Matsuo M."/>
            <person name="Hiramatsu K."/>
        </authorList>
    </citation>
    <scope>NUCLEOTIDE SEQUENCE [LARGE SCALE GENOMIC DNA]</scope>
    <source>
        <strain>Mu3 / ATCC 700698</strain>
    </source>
</reference>
<feature type="chain" id="PRO_1000000746" description="Endoribonuclease YbeY">
    <location>
        <begin position="1"/>
        <end position="155"/>
    </location>
</feature>
<feature type="binding site" evidence="1">
    <location>
        <position position="120"/>
    </location>
    <ligand>
        <name>Zn(2+)</name>
        <dbReference type="ChEBI" id="CHEBI:29105"/>
        <note>catalytic</note>
    </ligand>
</feature>
<feature type="binding site" evidence="1">
    <location>
        <position position="124"/>
    </location>
    <ligand>
        <name>Zn(2+)</name>
        <dbReference type="ChEBI" id="CHEBI:29105"/>
        <note>catalytic</note>
    </ligand>
</feature>
<feature type="binding site" evidence="1">
    <location>
        <position position="130"/>
    </location>
    <ligand>
        <name>Zn(2+)</name>
        <dbReference type="ChEBI" id="CHEBI:29105"/>
        <note>catalytic</note>
    </ligand>
</feature>
<organism>
    <name type="scientific">Staphylococcus aureus (strain Mu3 / ATCC 700698)</name>
    <dbReference type="NCBI Taxonomy" id="418127"/>
    <lineage>
        <taxon>Bacteria</taxon>
        <taxon>Bacillati</taxon>
        <taxon>Bacillota</taxon>
        <taxon>Bacilli</taxon>
        <taxon>Bacillales</taxon>
        <taxon>Staphylococcaceae</taxon>
        <taxon>Staphylococcus</taxon>
    </lineage>
</organism>